<feature type="chain" id="PRO_0000158770" description="Adenylate kinase">
    <location>
        <begin position="1"/>
        <end position="216"/>
    </location>
</feature>
<feature type="region of interest" description="NMP" evidence="1">
    <location>
        <begin position="30"/>
        <end position="59"/>
    </location>
</feature>
<feature type="region of interest" description="LID" evidence="1">
    <location>
        <begin position="126"/>
        <end position="164"/>
    </location>
</feature>
<feature type="binding site" evidence="1">
    <location>
        <begin position="10"/>
        <end position="15"/>
    </location>
    <ligand>
        <name>ATP</name>
        <dbReference type="ChEBI" id="CHEBI:30616"/>
    </ligand>
</feature>
<feature type="binding site" evidence="1">
    <location>
        <position position="31"/>
    </location>
    <ligand>
        <name>AMP</name>
        <dbReference type="ChEBI" id="CHEBI:456215"/>
    </ligand>
</feature>
<feature type="binding site" evidence="1">
    <location>
        <position position="36"/>
    </location>
    <ligand>
        <name>AMP</name>
        <dbReference type="ChEBI" id="CHEBI:456215"/>
    </ligand>
</feature>
<feature type="binding site" evidence="1">
    <location>
        <begin position="57"/>
        <end position="59"/>
    </location>
    <ligand>
        <name>AMP</name>
        <dbReference type="ChEBI" id="CHEBI:456215"/>
    </ligand>
</feature>
<feature type="binding site" evidence="1">
    <location>
        <begin position="85"/>
        <end position="88"/>
    </location>
    <ligand>
        <name>AMP</name>
        <dbReference type="ChEBI" id="CHEBI:456215"/>
    </ligand>
</feature>
<feature type="binding site" evidence="1">
    <location>
        <position position="92"/>
    </location>
    <ligand>
        <name>AMP</name>
        <dbReference type="ChEBI" id="CHEBI:456215"/>
    </ligand>
</feature>
<feature type="binding site" evidence="1">
    <location>
        <position position="127"/>
    </location>
    <ligand>
        <name>ATP</name>
        <dbReference type="ChEBI" id="CHEBI:30616"/>
    </ligand>
</feature>
<feature type="binding site" evidence="1">
    <location>
        <position position="130"/>
    </location>
    <ligand>
        <name>Zn(2+)</name>
        <dbReference type="ChEBI" id="CHEBI:29105"/>
        <note>structural</note>
    </ligand>
</feature>
<feature type="binding site" evidence="1">
    <location>
        <position position="133"/>
    </location>
    <ligand>
        <name>Zn(2+)</name>
        <dbReference type="ChEBI" id="CHEBI:29105"/>
        <note>structural</note>
    </ligand>
</feature>
<feature type="binding site" evidence="1">
    <location>
        <begin position="136"/>
        <end position="137"/>
    </location>
    <ligand>
        <name>ATP</name>
        <dbReference type="ChEBI" id="CHEBI:30616"/>
    </ligand>
</feature>
<feature type="binding site" evidence="1">
    <location>
        <position position="150"/>
    </location>
    <ligand>
        <name>Zn(2+)</name>
        <dbReference type="ChEBI" id="CHEBI:29105"/>
        <note>structural</note>
    </ligand>
</feature>
<feature type="binding site" evidence="1">
    <location>
        <position position="153"/>
    </location>
    <ligand>
        <name>Zn(2+)</name>
        <dbReference type="ChEBI" id="CHEBI:29105"/>
        <note>structural</note>
    </ligand>
</feature>
<feature type="binding site" evidence="1">
    <location>
        <position position="161"/>
    </location>
    <ligand>
        <name>AMP</name>
        <dbReference type="ChEBI" id="CHEBI:456215"/>
    </ligand>
</feature>
<feature type="binding site" evidence="1">
    <location>
        <position position="172"/>
    </location>
    <ligand>
        <name>AMP</name>
        <dbReference type="ChEBI" id="CHEBI:456215"/>
    </ligand>
</feature>
<feature type="binding site" evidence="1">
    <location>
        <position position="200"/>
    </location>
    <ligand>
        <name>ATP</name>
        <dbReference type="ChEBI" id="CHEBI:30616"/>
    </ligand>
</feature>
<organism>
    <name type="scientific">Enterococcus faecalis (strain ATCC 700802 / V583)</name>
    <dbReference type="NCBI Taxonomy" id="226185"/>
    <lineage>
        <taxon>Bacteria</taxon>
        <taxon>Bacillati</taxon>
        <taxon>Bacillota</taxon>
        <taxon>Bacilli</taxon>
        <taxon>Lactobacillales</taxon>
        <taxon>Enterococcaceae</taxon>
        <taxon>Enterococcus</taxon>
    </lineage>
</organism>
<proteinExistence type="inferred from homology"/>
<gene>
    <name evidence="1" type="primary">adk</name>
    <name type="ordered locus">EF_0228</name>
</gene>
<accession>Q839E3</accession>
<reference key="1">
    <citation type="journal article" date="2003" name="Science">
        <title>Role of mobile DNA in the evolution of vancomycin-resistant Enterococcus faecalis.</title>
        <authorList>
            <person name="Paulsen I.T."/>
            <person name="Banerjei L."/>
            <person name="Myers G.S.A."/>
            <person name="Nelson K.E."/>
            <person name="Seshadri R."/>
            <person name="Read T.D."/>
            <person name="Fouts D.E."/>
            <person name="Eisen J.A."/>
            <person name="Gill S.R."/>
            <person name="Heidelberg J.F."/>
            <person name="Tettelin H."/>
            <person name="Dodson R.J."/>
            <person name="Umayam L.A."/>
            <person name="Brinkac L.M."/>
            <person name="Beanan M.J."/>
            <person name="Daugherty S.C."/>
            <person name="DeBoy R.T."/>
            <person name="Durkin S.A."/>
            <person name="Kolonay J.F."/>
            <person name="Madupu R."/>
            <person name="Nelson W.C."/>
            <person name="Vamathevan J.J."/>
            <person name="Tran B."/>
            <person name="Upton J."/>
            <person name="Hansen T."/>
            <person name="Shetty J."/>
            <person name="Khouri H.M."/>
            <person name="Utterback T.R."/>
            <person name="Radune D."/>
            <person name="Ketchum K.A."/>
            <person name="Dougherty B.A."/>
            <person name="Fraser C.M."/>
        </authorList>
    </citation>
    <scope>NUCLEOTIDE SEQUENCE [LARGE SCALE GENOMIC DNA]</scope>
    <source>
        <strain>ATCC 700802 / V583</strain>
    </source>
</reference>
<keyword id="KW-0067">ATP-binding</keyword>
<keyword id="KW-0963">Cytoplasm</keyword>
<keyword id="KW-0418">Kinase</keyword>
<keyword id="KW-0479">Metal-binding</keyword>
<keyword id="KW-0545">Nucleotide biosynthesis</keyword>
<keyword id="KW-0547">Nucleotide-binding</keyword>
<keyword id="KW-1185">Reference proteome</keyword>
<keyword id="KW-0808">Transferase</keyword>
<keyword id="KW-0862">Zinc</keyword>
<name>KAD_ENTFA</name>
<comment type="function">
    <text evidence="1">Catalyzes the reversible transfer of the terminal phosphate group between ATP and AMP. Plays an important role in cellular energy homeostasis and in adenine nucleotide metabolism.</text>
</comment>
<comment type="catalytic activity">
    <reaction evidence="1">
        <text>AMP + ATP = 2 ADP</text>
        <dbReference type="Rhea" id="RHEA:12973"/>
        <dbReference type="ChEBI" id="CHEBI:30616"/>
        <dbReference type="ChEBI" id="CHEBI:456215"/>
        <dbReference type="ChEBI" id="CHEBI:456216"/>
        <dbReference type="EC" id="2.7.4.3"/>
    </reaction>
</comment>
<comment type="pathway">
    <text evidence="1">Purine metabolism; AMP biosynthesis via salvage pathway; AMP from ADP: step 1/1.</text>
</comment>
<comment type="subunit">
    <text evidence="1">Monomer.</text>
</comment>
<comment type="subcellular location">
    <subcellularLocation>
        <location evidence="1">Cytoplasm</location>
    </subcellularLocation>
</comment>
<comment type="domain">
    <text evidence="1">Consists of three domains, a large central CORE domain and two small peripheral domains, NMPbind and LID, which undergo movements during catalysis. The LID domain closes over the site of phosphoryl transfer upon ATP binding. Assembling and dissambling the active center during each catalytic cycle provides an effective means to prevent ATP hydrolysis. Some bacteria have evolved a zinc-coordinating structure that stabilizes the LID domain.</text>
</comment>
<comment type="similarity">
    <text evidence="1">Belongs to the adenylate kinase family.</text>
</comment>
<sequence length="216" mass="24040">MNLILMGLPGAGKGTQAEKIIDTYGIPHISTGDMFRAAMKNETALGLEAKSYIDKGELVPDEVTNGIVKERLAEPDTDKGFLLDGFPRTLDQAKALDTMLKELNKKIDAVIDIHVEEDVLIERLAGRFICRTCGATYHKLFNPPKVEGTCDRCGGHEFYQREDDKPETVKNRLAVNIESSAPILAFYKEQGLMHTIDGNREIDTVFSDVKKIIDEN</sequence>
<evidence type="ECO:0000255" key="1">
    <source>
        <dbReference type="HAMAP-Rule" id="MF_00235"/>
    </source>
</evidence>
<dbReference type="EC" id="2.7.4.3" evidence="1"/>
<dbReference type="EMBL" id="AE016830">
    <property type="protein sequence ID" value="AAO80096.1"/>
    <property type="molecule type" value="Genomic_DNA"/>
</dbReference>
<dbReference type="RefSeq" id="NP_814025.1">
    <property type="nucleotide sequence ID" value="NC_004668.1"/>
</dbReference>
<dbReference type="RefSeq" id="WP_002356223.1">
    <property type="nucleotide sequence ID" value="NZ_KE136524.1"/>
</dbReference>
<dbReference type="SMR" id="Q839E3"/>
<dbReference type="STRING" id="226185.EF_0228"/>
<dbReference type="EnsemblBacteria" id="AAO80096">
    <property type="protein sequence ID" value="AAO80096"/>
    <property type="gene ID" value="EF_0228"/>
</dbReference>
<dbReference type="KEGG" id="efa:EF0228"/>
<dbReference type="PATRIC" id="fig|226185.45.peg.39"/>
<dbReference type="eggNOG" id="COG0563">
    <property type="taxonomic scope" value="Bacteria"/>
</dbReference>
<dbReference type="HOGENOM" id="CLU_032354_1_2_9"/>
<dbReference type="UniPathway" id="UPA00588">
    <property type="reaction ID" value="UER00649"/>
</dbReference>
<dbReference type="Proteomes" id="UP000001415">
    <property type="component" value="Chromosome"/>
</dbReference>
<dbReference type="GO" id="GO:0005737">
    <property type="term" value="C:cytoplasm"/>
    <property type="evidence" value="ECO:0007669"/>
    <property type="project" value="UniProtKB-SubCell"/>
</dbReference>
<dbReference type="GO" id="GO:0004017">
    <property type="term" value="F:adenylate kinase activity"/>
    <property type="evidence" value="ECO:0007669"/>
    <property type="project" value="UniProtKB-UniRule"/>
</dbReference>
<dbReference type="GO" id="GO:0005524">
    <property type="term" value="F:ATP binding"/>
    <property type="evidence" value="ECO:0007669"/>
    <property type="project" value="UniProtKB-UniRule"/>
</dbReference>
<dbReference type="GO" id="GO:0008270">
    <property type="term" value="F:zinc ion binding"/>
    <property type="evidence" value="ECO:0007669"/>
    <property type="project" value="UniProtKB-UniRule"/>
</dbReference>
<dbReference type="GO" id="GO:0044209">
    <property type="term" value="P:AMP salvage"/>
    <property type="evidence" value="ECO:0007669"/>
    <property type="project" value="UniProtKB-UniRule"/>
</dbReference>
<dbReference type="CDD" id="cd01428">
    <property type="entry name" value="ADK"/>
    <property type="match status" value="1"/>
</dbReference>
<dbReference type="FunFam" id="3.40.50.300:FF:000106">
    <property type="entry name" value="Adenylate kinase mitochondrial"/>
    <property type="match status" value="1"/>
</dbReference>
<dbReference type="Gene3D" id="3.40.50.300">
    <property type="entry name" value="P-loop containing nucleotide triphosphate hydrolases"/>
    <property type="match status" value="1"/>
</dbReference>
<dbReference type="HAMAP" id="MF_00235">
    <property type="entry name" value="Adenylate_kinase_Adk"/>
    <property type="match status" value="1"/>
</dbReference>
<dbReference type="InterPro" id="IPR006259">
    <property type="entry name" value="Adenyl_kin_sub"/>
</dbReference>
<dbReference type="InterPro" id="IPR000850">
    <property type="entry name" value="Adenylat/UMP-CMP_kin"/>
</dbReference>
<dbReference type="InterPro" id="IPR033690">
    <property type="entry name" value="Adenylat_kinase_CS"/>
</dbReference>
<dbReference type="InterPro" id="IPR007862">
    <property type="entry name" value="Adenylate_kinase_lid-dom"/>
</dbReference>
<dbReference type="InterPro" id="IPR027417">
    <property type="entry name" value="P-loop_NTPase"/>
</dbReference>
<dbReference type="NCBIfam" id="TIGR01351">
    <property type="entry name" value="adk"/>
    <property type="match status" value="1"/>
</dbReference>
<dbReference type="NCBIfam" id="NF001380">
    <property type="entry name" value="PRK00279.1-2"/>
    <property type="match status" value="1"/>
</dbReference>
<dbReference type="NCBIfam" id="NF001381">
    <property type="entry name" value="PRK00279.1-3"/>
    <property type="match status" value="1"/>
</dbReference>
<dbReference type="NCBIfam" id="NF011100">
    <property type="entry name" value="PRK14527.1"/>
    <property type="match status" value="1"/>
</dbReference>
<dbReference type="PANTHER" id="PTHR23359">
    <property type="entry name" value="NUCLEOTIDE KINASE"/>
    <property type="match status" value="1"/>
</dbReference>
<dbReference type="Pfam" id="PF00406">
    <property type="entry name" value="ADK"/>
    <property type="match status" value="1"/>
</dbReference>
<dbReference type="Pfam" id="PF05191">
    <property type="entry name" value="ADK_lid"/>
    <property type="match status" value="1"/>
</dbReference>
<dbReference type="PRINTS" id="PR00094">
    <property type="entry name" value="ADENYLTKNASE"/>
</dbReference>
<dbReference type="SUPFAM" id="SSF52540">
    <property type="entry name" value="P-loop containing nucleoside triphosphate hydrolases"/>
    <property type="match status" value="1"/>
</dbReference>
<dbReference type="PROSITE" id="PS00113">
    <property type="entry name" value="ADENYLATE_KINASE"/>
    <property type="match status" value="1"/>
</dbReference>
<protein>
    <recommendedName>
        <fullName evidence="1">Adenylate kinase</fullName>
        <shortName evidence="1">AK</shortName>
        <ecNumber evidence="1">2.7.4.3</ecNumber>
    </recommendedName>
    <alternativeName>
        <fullName evidence="1">ATP-AMP transphosphorylase</fullName>
    </alternativeName>
    <alternativeName>
        <fullName evidence="1">ATP:AMP phosphotransferase</fullName>
    </alternativeName>
    <alternativeName>
        <fullName evidence="1">Adenylate monophosphate kinase</fullName>
    </alternativeName>
</protein>